<gene>
    <name evidence="1" type="primary">rpsU</name>
    <name type="ordered locus">ABBFA_001195</name>
</gene>
<dbReference type="EMBL" id="CP001172">
    <property type="protein sequence ID" value="ACJ59324.1"/>
    <property type="molecule type" value="Genomic_DNA"/>
</dbReference>
<dbReference type="RefSeq" id="WP_001136722.1">
    <property type="nucleotide sequence ID" value="NZ_CP001172.1"/>
</dbReference>
<dbReference type="SMR" id="B7H0A6"/>
<dbReference type="GeneID" id="97425938"/>
<dbReference type="HOGENOM" id="CLU_159258_1_0_6"/>
<dbReference type="Proteomes" id="UP000006924">
    <property type="component" value="Chromosome"/>
</dbReference>
<dbReference type="GO" id="GO:1990904">
    <property type="term" value="C:ribonucleoprotein complex"/>
    <property type="evidence" value="ECO:0007669"/>
    <property type="project" value="UniProtKB-KW"/>
</dbReference>
<dbReference type="GO" id="GO:0005840">
    <property type="term" value="C:ribosome"/>
    <property type="evidence" value="ECO:0007669"/>
    <property type="project" value="UniProtKB-KW"/>
</dbReference>
<dbReference type="GO" id="GO:0003735">
    <property type="term" value="F:structural constituent of ribosome"/>
    <property type="evidence" value="ECO:0007669"/>
    <property type="project" value="InterPro"/>
</dbReference>
<dbReference type="GO" id="GO:0006412">
    <property type="term" value="P:translation"/>
    <property type="evidence" value="ECO:0007669"/>
    <property type="project" value="UniProtKB-UniRule"/>
</dbReference>
<dbReference type="Gene3D" id="1.20.5.1150">
    <property type="entry name" value="Ribosomal protein S8"/>
    <property type="match status" value="1"/>
</dbReference>
<dbReference type="HAMAP" id="MF_00358">
    <property type="entry name" value="Ribosomal_bS21"/>
    <property type="match status" value="1"/>
</dbReference>
<dbReference type="InterPro" id="IPR001911">
    <property type="entry name" value="Ribosomal_bS21"/>
</dbReference>
<dbReference type="InterPro" id="IPR018278">
    <property type="entry name" value="Ribosomal_bS21_CS"/>
</dbReference>
<dbReference type="InterPro" id="IPR038380">
    <property type="entry name" value="Ribosomal_bS21_sf"/>
</dbReference>
<dbReference type="NCBIfam" id="TIGR00030">
    <property type="entry name" value="S21p"/>
    <property type="match status" value="1"/>
</dbReference>
<dbReference type="PANTHER" id="PTHR21109">
    <property type="entry name" value="MITOCHONDRIAL 28S RIBOSOMAL PROTEIN S21"/>
    <property type="match status" value="1"/>
</dbReference>
<dbReference type="PANTHER" id="PTHR21109:SF22">
    <property type="entry name" value="SMALL RIBOSOMAL SUBUNIT PROTEIN BS21"/>
    <property type="match status" value="1"/>
</dbReference>
<dbReference type="Pfam" id="PF01165">
    <property type="entry name" value="Ribosomal_S21"/>
    <property type="match status" value="1"/>
</dbReference>
<dbReference type="PRINTS" id="PR00976">
    <property type="entry name" value="RIBOSOMALS21"/>
</dbReference>
<dbReference type="PROSITE" id="PS01181">
    <property type="entry name" value="RIBOSOMAL_S21"/>
    <property type="match status" value="1"/>
</dbReference>
<feature type="chain" id="PRO_1000120570" description="Small ribosomal subunit protein bS21">
    <location>
        <begin position="1"/>
        <end position="71"/>
    </location>
</feature>
<name>RS21_ACIB3</name>
<comment type="similarity">
    <text evidence="1">Belongs to the bacterial ribosomal protein bS21 family.</text>
</comment>
<sequence>MPQVKLKEGEPVDVAIRRFKRSCEKAGVLADVRKREFYEKPTQERKRKKAAAVKRYQKKLARESVRTTRLY</sequence>
<keyword id="KW-0687">Ribonucleoprotein</keyword>
<keyword id="KW-0689">Ribosomal protein</keyword>
<evidence type="ECO:0000255" key="1">
    <source>
        <dbReference type="HAMAP-Rule" id="MF_00358"/>
    </source>
</evidence>
<evidence type="ECO:0000305" key="2"/>
<proteinExistence type="inferred from homology"/>
<protein>
    <recommendedName>
        <fullName evidence="1">Small ribosomal subunit protein bS21</fullName>
    </recommendedName>
    <alternativeName>
        <fullName evidence="2">30S ribosomal protein S21</fullName>
    </alternativeName>
</protein>
<reference key="1">
    <citation type="journal article" date="2008" name="J. Bacteriol.">
        <title>Comparative genome sequence analysis of multidrug-resistant Acinetobacter baumannii.</title>
        <authorList>
            <person name="Adams M.D."/>
            <person name="Goglin K."/>
            <person name="Molyneaux N."/>
            <person name="Hujer K.M."/>
            <person name="Lavender H."/>
            <person name="Jamison J.J."/>
            <person name="MacDonald I.J."/>
            <person name="Martin K.M."/>
            <person name="Russo T."/>
            <person name="Campagnari A.A."/>
            <person name="Hujer A.M."/>
            <person name="Bonomo R.A."/>
            <person name="Gill S.R."/>
        </authorList>
    </citation>
    <scope>NUCLEOTIDE SEQUENCE [LARGE SCALE GENOMIC DNA]</scope>
    <source>
        <strain>AB307-0294</strain>
    </source>
</reference>
<organism>
    <name type="scientific">Acinetobacter baumannii (strain AB307-0294)</name>
    <dbReference type="NCBI Taxonomy" id="557600"/>
    <lineage>
        <taxon>Bacteria</taxon>
        <taxon>Pseudomonadati</taxon>
        <taxon>Pseudomonadota</taxon>
        <taxon>Gammaproteobacteria</taxon>
        <taxon>Moraxellales</taxon>
        <taxon>Moraxellaceae</taxon>
        <taxon>Acinetobacter</taxon>
        <taxon>Acinetobacter calcoaceticus/baumannii complex</taxon>
    </lineage>
</organism>
<accession>B7H0A6</accession>